<sequence>MARIAGVDLPREKRIEIALTYIFGIGLSRSKQILRDTGVDPNKRVKDLTDDEVAKIRDYIDKNFKVEGELRAEIARNIKRLIDIRCYRGLRHLRGLPVRGQRTRTNARTRKGPRKTVGVMRKKS</sequence>
<name>RS13_CALS8</name>
<accession>A4XLQ5</accession>
<keyword id="KW-0687">Ribonucleoprotein</keyword>
<keyword id="KW-0689">Ribosomal protein</keyword>
<keyword id="KW-0694">RNA-binding</keyword>
<keyword id="KW-0699">rRNA-binding</keyword>
<keyword id="KW-0820">tRNA-binding</keyword>
<protein>
    <recommendedName>
        <fullName evidence="1">Small ribosomal subunit protein uS13</fullName>
    </recommendedName>
    <alternativeName>
        <fullName evidence="3">30S ribosomal protein S13</fullName>
    </alternativeName>
</protein>
<proteinExistence type="inferred from homology"/>
<organism>
    <name type="scientific">Caldicellulosiruptor saccharolyticus (strain ATCC 43494 / DSM 8903 / Tp8T 6331)</name>
    <dbReference type="NCBI Taxonomy" id="351627"/>
    <lineage>
        <taxon>Bacteria</taxon>
        <taxon>Bacillati</taxon>
        <taxon>Bacillota</taxon>
        <taxon>Bacillota incertae sedis</taxon>
        <taxon>Caldicellulosiruptorales</taxon>
        <taxon>Caldicellulosiruptoraceae</taxon>
        <taxon>Caldicellulosiruptor</taxon>
    </lineage>
</organism>
<reference key="1">
    <citation type="submission" date="2007-04" db="EMBL/GenBank/DDBJ databases">
        <title>Genome sequence of the thermophilic hydrogen-producing bacterium Caldicellulosiruptor saccharolyticus DSM 8903.</title>
        <authorList>
            <person name="Copeland A."/>
            <person name="Lucas S."/>
            <person name="Lapidus A."/>
            <person name="Barry K."/>
            <person name="Detter J.C."/>
            <person name="Glavina del Rio T."/>
            <person name="Hammon N."/>
            <person name="Israni S."/>
            <person name="Dalin E."/>
            <person name="Tice H."/>
            <person name="Pitluck S."/>
            <person name="Kiss H."/>
            <person name="Brettin T."/>
            <person name="Bruce D."/>
            <person name="Han C."/>
            <person name="Schmutz J."/>
            <person name="Larimer F."/>
            <person name="Land M."/>
            <person name="Hauser L."/>
            <person name="Kyrpides N."/>
            <person name="Lykidis A."/>
            <person name="van de Werken H.J.G."/>
            <person name="Verhaart M.R.A."/>
            <person name="VanFossen A.L."/>
            <person name="Lewis D.L."/>
            <person name="Nichols J.D."/>
            <person name="Goorissen H.P."/>
            <person name="van Niel E.W.J."/>
            <person name="Stams F.J.M."/>
            <person name="Willquist K.U."/>
            <person name="Ward D.E."/>
            <person name="van der Oost J."/>
            <person name="Kelly R.M."/>
            <person name="Kengen S.M.W."/>
            <person name="Richardson P."/>
        </authorList>
    </citation>
    <scope>NUCLEOTIDE SEQUENCE [LARGE SCALE GENOMIC DNA]</scope>
    <source>
        <strain>ATCC 43494 / DSM 8903 / Tp8T 6331</strain>
    </source>
</reference>
<evidence type="ECO:0000255" key="1">
    <source>
        <dbReference type="HAMAP-Rule" id="MF_01315"/>
    </source>
</evidence>
<evidence type="ECO:0000256" key="2">
    <source>
        <dbReference type="SAM" id="MobiDB-lite"/>
    </source>
</evidence>
<evidence type="ECO:0000305" key="3"/>
<gene>
    <name evidence="1" type="primary">rpsM</name>
    <name type="ordered locus">Csac_2262</name>
</gene>
<dbReference type="EMBL" id="CP000679">
    <property type="protein sequence ID" value="ABP67840.1"/>
    <property type="molecule type" value="Genomic_DNA"/>
</dbReference>
<dbReference type="RefSeq" id="WP_011917766.1">
    <property type="nucleotide sequence ID" value="NC_009437.1"/>
</dbReference>
<dbReference type="SMR" id="A4XLQ5"/>
<dbReference type="STRING" id="351627.Csac_2262"/>
<dbReference type="KEGG" id="csc:Csac_2262"/>
<dbReference type="eggNOG" id="COG0099">
    <property type="taxonomic scope" value="Bacteria"/>
</dbReference>
<dbReference type="HOGENOM" id="CLU_103849_1_2_9"/>
<dbReference type="OrthoDB" id="9803610at2"/>
<dbReference type="Proteomes" id="UP000000256">
    <property type="component" value="Chromosome"/>
</dbReference>
<dbReference type="GO" id="GO:0005829">
    <property type="term" value="C:cytosol"/>
    <property type="evidence" value="ECO:0007669"/>
    <property type="project" value="TreeGrafter"/>
</dbReference>
<dbReference type="GO" id="GO:0015935">
    <property type="term" value="C:small ribosomal subunit"/>
    <property type="evidence" value="ECO:0007669"/>
    <property type="project" value="TreeGrafter"/>
</dbReference>
<dbReference type="GO" id="GO:0019843">
    <property type="term" value="F:rRNA binding"/>
    <property type="evidence" value="ECO:0007669"/>
    <property type="project" value="UniProtKB-UniRule"/>
</dbReference>
<dbReference type="GO" id="GO:0003735">
    <property type="term" value="F:structural constituent of ribosome"/>
    <property type="evidence" value="ECO:0007669"/>
    <property type="project" value="InterPro"/>
</dbReference>
<dbReference type="GO" id="GO:0000049">
    <property type="term" value="F:tRNA binding"/>
    <property type="evidence" value="ECO:0007669"/>
    <property type="project" value="UniProtKB-UniRule"/>
</dbReference>
<dbReference type="GO" id="GO:0006412">
    <property type="term" value="P:translation"/>
    <property type="evidence" value="ECO:0007669"/>
    <property type="project" value="UniProtKB-UniRule"/>
</dbReference>
<dbReference type="FunFam" id="1.10.8.50:FF:000001">
    <property type="entry name" value="30S ribosomal protein S13"/>
    <property type="match status" value="1"/>
</dbReference>
<dbReference type="FunFam" id="4.10.910.10:FF:000001">
    <property type="entry name" value="30S ribosomal protein S13"/>
    <property type="match status" value="1"/>
</dbReference>
<dbReference type="Gene3D" id="1.10.8.50">
    <property type="match status" value="1"/>
</dbReference>
<dbReference type="Gene3D" id="4.10.910.10">
    <property type="entry name" value="30s ribosomal protein s13, domain 2"/>
    <property type="match status" value="1"/>
</dbReference>
<dbReference type="HAMAP" id="MF_01315">
    <property type="entry name" value="Ribosomal_uS13"/>
    <property type="match status" value="1"/>
</dbReference>
<dbReference type="InterPro" id="IPR027437">
    <property type="entry name" value="Rbsml_uS13_C"/>
</dbReference>
<dbReference type="InterPro" id="IPR001892">
    <property type="entry name" value="Ribosomal_uS13"/>
</dbReference>
<dbReference type="InterPro" id="IPR010979">
    <property type="entry name" value="Ribosomal_uS13-like_H2TH"/>
</dbReference>
<dbReference type="InterPro" id="IPR019980">
    <property type="entry name" value="Ribosomal_uS13_bac-type"/>
</dbReference>
<dbReference type="InterPro" id="IPR018269">
    <property type="entry name" value="Ribosomal_uS13_CS"/>
</dbReference>
<dbReference type="NCBIfam" id="TIGR03631">
    <property type="entry name" value="uS13_bact"/>
    <property type="match status" value="1"/>
</dbReference>
<dbReference type="PANTHER" id="PTHR10871">
    <property type="entry name" value="30S RIBOSOMAL PROTEIN S13/40S RIBOSOMAL PROTEIN S18"/>
    <property type="match status" value="1"/>
</dbReference>
<dbReference type="PANTHER" id="PTHR10871:SF1">
    <property type="entry name" value="SMALL RIBOSOMAL SUBUNIT PROTEIN US13M"/>
    <property type="match status" value="1"/>
</dbReference>
<dbReference type="Pfam" id="PF00416">
    <property type="entry name" value="Ribosomal_S13"/>
    <property type="match status" value="1"/>
</dbReference>
<dbReference type="PIRSF" id="PIRSF002134">
    <property type="entry name" value="Ribosomal_S13"/>
    <property type="match status" value="1"/>
</dbReference>
<dbReference type="SUPFAM" id="SSF46946">
    <property type="entry name" value="S13-like H2TH domain"/>
    <property type="match status" value="1"/>
</dbReference>
<dbReference type="PROSITE" id="PS00646">
    <property type="entry name" value="RIBOSOMAL_S13_1"/>
    <property type="match status" value="1"/>
</dbReference>
<dbReference type="PROSITE" id="PS50159">
    <property type="entry name" value="RIBOSOMAL_S13_2"/>
    <property type="match status" value="1"/>
</dbReference>
<feature type="chain" id="PRO_1000051872" description="Small ribosomal subunit protein uS13">
    <location>
        <begin position="1"/>
        <end position="124"/>
    </location>
</feature>
<feature type="region of interest" description="Disordered" evidence="2">
    <location>
        <begin position="99"/>
        <end position="124"/>
    </location>
</feature>
<feature type="compositionally biased region" description="Basic residues" evidence="2">
    <location>
        <begin position="101"/>
        <end position="124"/>
    </location>
</feature>
<comment type="function">
    <text evidence="1">Located at the top of the head of the 30S subunit, it contacts several helices of the 16S rRNA. In the 70S ribosome it contacts the 23S rRNA (bridge B1a) and protein L5 of the 50S subunit (bridge B1b), connecting the 2 subunits; these bridges are implicated in subunit movement. Contacts the tRNAs in the A and P-sites.</text>
</comment>
<comment type="subunit">
    <text evidence="1">Part of the 30S ribosomal subunit. Forms a loose heterodimer with protein S19. Forms two bridges to the 50S subunit in the 70S ribosome.</text>
</comment>
<comment type="similarity">
    <text evidence="1">Belongs to the universal ribosomal protein uS13 family.</text>
</comment>